<protein>
    <recommendedName>
        <fullName evidence="1">Queuine tRNA-ribosyltransferase</fullName>
        <ecNumber evidence="1">2.4.2.29</ecNumber>
    </recommendedName>
    <alternativeName>
        <fullName evidence="1">Guanine insertion enzyme</fullName>
    </alternativeName>
    <alternativeName>
        <fullName evidence="1">tRNA-guanine transglycosylase</fullName>
    </alternativeName>
</protein>
<keyword id="KW-0328">Glycosyltransferase</keyword>
<keyword id="KW-0479">Metal-binding</keyword>
<keyword id="KW-0671">Queuosine biosynthesis</keyword>
<keyword id="KW-1185">Reference proteome</keyword>
<keyword id="KW-0808">Transferase</keyword>
<keyword id="KW-0819">tRNA processing</keyword>
<keyword id="KW-0862">Zinc</keyword>
<reference key="1">
    <citation type="journal article" date="2008" name="Proc. Natl. Acad. Sci. U.S.A.">
        <title>The genome of Clostridium kluyveri, a strict anaerobe with unique metabolic features.</title>
        <authorList>
            <person name="Seedorf H."/>
            <person name="Fricke W.F."/>
            <person name="Veith B."/>
            <person name="Brueggemann H."/>
            <person name="Liesegang H."/>
            <person name="Strittmatter A."/>
            <person name="Miethke M."/>
            <person name="Buckel W."/>
            <person name="Hinderberger J."/>
            <person name="Li F."/>
            <person name="Hagemeier C."/>
            <person name="Thauer R.K."/>
            <person name="Gottschalk G."/>
        </authorList>
    </citation>
    <scope>NUCLEOTIDE SEQUENCE [LARGE SCALE GENOMIC DNA]</scope>
    <source>
        <strain>ATCC 8527 / DSM 555 / NBRC 12016 / NCIMB 10680 / K1</strain>
    </source>
</reference>
<proteinExistence type="inferred from homology"/>
<sequence length="376" mass="42898">MYKLLKKDGSSRRGEFSTPHGVVQTPVFMNVGTLAAIKGAVSTEDLKEIGCQIELSNTYHLSLRPGDEVIRKLGGLHKFMNWDRPILTDSGGFQVFSLSGMRKIKEEGVYFNSHIDGRKIFMGPEESMRIQSNLASTVAMAFDECVENPAPKEYVEDSVKRTTRWLKRCKIEIDRLNSMPHTINNKQMLFGINQGGVHDDIRMEHAKIISDMDLDGYAIGGLAVGETHEEMYRVLEKVVPNLPENKPIYLMGVGTPANILEAVERGVDFFDCVMPSRNGRHSHVFTSYGVIHLLNAKYELDDNPIDSECSCPTCKNYTRAYIRHLFKAKEMLAMRLCVIHNLYFYNNLMKEIRESIDKGNFLQYKKEKLEKWNETV</sequence>
<gene>
    <name evidence="1" type="primary">tgt</name>
    <name type="ordered locus">CKL_3142</name>
</gene>
<feature type="chain" id="PRO_1000077001" description="Queuine tRNA-ribosyltransferase">
    <location>
        <begin position="1"/>
        <end position="376"/>
    </location>
</feature>
<feature type="region of interest" description="RNA binding" evidence="1">
    <location>
        <begin position="252"/>
        <end position="258"/>
    </location>
</feature>
<feature type="active site" description="Proton acceptor" evidence="1">
    <location>
        <position position="89"/>
    </location>
</feature>
<feature type="active site" description="Nucleophile" evidence="1">
    <location>
        <position position="271"/>
    </location>
</feature>
<feature type="binding site" evidence="1">
    <location>
        <begin position="89"/>
        <end position="93"/>
    </location>
    <ligand>
        <name>substrate</name>
    </ligand>
</feature>
<feature type="binding site" evidence="1">
    <location>
        <position position="143"/>
    </location>
    <ligand>
        <name>substrate</name>
    </ligand>
</feature>
<feature type="binding site" evidence="1">
    <location>
        <position position="194"/>
    </location>
    <ligand>
        <name>substrate</name>
    </ligand>
</feature>
<feature type="binding site" evidence="1">
    <location>
        <position position="221"/>
    </location>
    <ligand>
        <name>substrate</name>
    </ligand>
</feature>
<feature type="binding site" evidence="1">
    <location>
        <position position="309"/>
    </location>
    <ligand>
        <name>Zn(2+)</name>
        <dbReference type="ChEBI" id="CHEBI:29105"/>
    </ligand>
</feature>
<feature type="binding site" evidence="1">
    <location>
        <position position="311"/>
    </location>
    <ligand>
        <name>Zn(2+)</name>
        <dbReference type="ChEBI" id="CHEBI:29105"/>
    </ligand>
</feature>
<feature type="binding site" evidence="1">
    <location>
        <position position="314"/>
    </location>
    <ligand>
        <name>Zn(2+)</name>
        <dbReference type="ChEBI" id="CHEBI:29105"/>
    </ligand>
</feature>
<feature type="binding site" evidence="1">
    <location>
        <position position="340"/>
    </location>
    <ligand>
        <name>Zn(2+)</name>
        <dbReference type="ChEBI" id="CHEBI:29105"/>
    </ligand>
</feature>
<dbReference type="EC" id="2.4.2.29" evidence="1"/>
<dbReference type="EMBL" id="CP000673">
    <property type="protein sequence ID" value="EDK35150.1"/>
    <property type="molecule type" value="Genomic_DNA"/>
</dbReference>
<dbReference type="RefSeq" id="WP_012103485.1">
    <property type="nucleotide sequence ID" value="NC_009706.1"/>
</dbReference>
<dbReference type="SMR" id="A5N204"/>
<dbReference type="STRING" id="431943.CKL_3142"/>
<dbReference type="KEGG" id="ckl:CKL_3142"/>
<dbReference type="eggNOG" id="COG0343">
    <property type="taxonomic scope" value="Bacteria"/>
</dbReference>
<dbReference type="HOGENOM" id="CLU_022060_0_1_9"/>
<dbReference type="UniPathway" id="UPA00392"/>
<dbReference type="Proteomes" id="UP000002411">
    <property type="component" value="Chromosome"/>
</dbReference>
<dbReference type="GO" id="GO:0005829">
    <property type="term" value="C:cytosol"/>
    <property type="evidence" value="ECO:0007669"/>
    <property type="project" value="TreeGrafter"/>
</dbReference>
<dbReference type="GO" id="GO:0046872">
    <property type="term" value="F:metal ion binding"/>
    <property type="evidence" value="ECO:0007669"/>
    <property type="project" value="UniProtKB-KW"/>
</dbReference>
<dbReference type="GO" id="GO:0008479">
    <property type="term" value="F:tRNA-guanosine(34) queuine transglycosylase activity"/>
    <property type="evidence" value="ECO:0007669"/>
    <property type="project" value="UniProtKB-UniRule"/>
</dbReference>
<dbReference type="GO" id="GO:0008616">
    <property type="term" value="P:queuosine biosynthetic process"/>
    <property type="evidence" value="ECO:0007669"/>
    <property type="project" value="UniProtKB-UniRule"/>
</dbReference>
<dbReference type="GO" id="GO:0002099">
    <property type="term" value="P:tRNA wobble guanine modification"/>
    <property type="evidence" value="ECO:0007669"/>
    <property type="project" value="TreeGrafter"/>
</dbReference>
<dbReference type="GO" id="GO:0101030">
    <property type="term" value="P:tRNA-guanine transglycosylation"/>
    <property type="evidence" value="ECO:0007669"/>
    <property type="project" value="InterPro"/>
</dbReference>
<dbReference type="FunFam" id="3.20.20.105:FF:000001">
    <property type="entry name" value="Queuine tRNA-ribosyltransferase"/>
    <property type="match status" value="1"/>
</dbReference>
<dbReference type="Gene3D" id="3.20.20.105">
    <property type="entry name" value="Queuine tRNA-ribosyltransferase-like"/>
    <property type="match status" value="1"/>
</dbReference>
<dbReference type="HAMAP" id="MF_00168">
    <property type="entry name" value="Q_tRNA_Tgt"/>
    <property type="match status" value="1"/>
</dbReference>
<dbReference type="InterPro" id="IPR050076">
    <property type="entry name" value="ArchSynthase1/Queuine_TRR"/>
</dbReference>
<dbReference type="InterPro" id="IPR004803">
    <property type="entry name" value="TGT"/>
</dbReference>
<dbReference type="InterPro" id="IPR036511">
    <property type="entry name" value="TGT-like_sf"/>
</dbReference>
<dbReference type="InterPro" id="IPR002616">
    <property type="entry name" value="tRNA_ribo_trans-like"/>
</dbReference>
<dbReference type="NCBIfam" id="TIGR00430">
    <property type="entry name" value="Q_tRNA_tgt"/>
    <property type="match status" value="1"/>
</dbReference>
<dbReference type="NCBIfam" id="TIGR00449">
    <property type="entry name" value="tgt_general"/>
    <property type="match status" value="1"/>
</dbReference>
<dbReference type="PANTHER" id="PTHR46499">
    <property type="entry name" value="QUEUINE TRNA-RIBOSYLTRANSFERASE"/>
    <property type="match status" value="1"/>
</dbReference>
<dbReference type="PANTHER" id="PTHR46499:SF1">
    <property type="entry name" value="QUEUINE TRNA-RIBOSYLTRANSFERASE"/>
    <property type="match status" value="1"/>
</dbReference>
<dbReference type="Pfam" id="PF01702">
    <property type="entry name" value="TGT"/>
    <property type="match status" value="1"/>
</dbReference>
<dbReference type="SUPFAM" id="SSF51713">
    <property type="entry name" value="tRNA-guanine transglycosylase"/>
    <property type="match status" value="1"/>
</dbReference>
<comment type="function">
    <text evidence="1">Catalyzes the base-exchange of a guanine (G) residue with the queuine precursor 7-aminomethyl-7-deazaguanine (PreQ1) at position 34 (anticodon wobble position) in tRNAs with GU(N) anticodons (tRNA-Asp, -Asn, -His and -Tyr). Catalysis occurs through a double-displacement mechanism. The nucleophile active site attacks the C1' of nucleotide 34 to detach the guanine base from the RNA, forming a covalent enzyme-RNA intermediate. The proton acceptor active site deprotonates the incoming PreQ1, allowing a nucleophilic attack on the C1' of the ribose to form the product. After dissociation, two additional enzymatic reactions on the tRNA convert PreQ1 to queuine (Q), resulting in the hypermodified nucleoside queuosine (7-(((4,5-cis-dihydroxy-2-cyclopenten-1-yl)amino)methyl)-7-deazaguanosine).</text>
</comment>
<comment type="catalytic activity">
    <reaction evidence="1">
        <text>7-aminomethyl-7-carbaguanine + guanosine(34) in tRNA = 7-aminomethyl-7-carbaguanosine(34) in tRNA + guanine</text>
        <dbReference type="Rhea" id="RHEA:24104"/>
        <dbReference type="Rhea" id="RHEA-COMP:10341"/>
        <dbReference type="Rhea" id="RHEA-COMP:10342"/>
        <dbReference type="ChEBI" id="CHEBI:16235"/>
        <dbReference type="ChEBI" id="CHEBI:58703"/>
        <dbReference type="ChEBI" id="CHEBI:74269"/>
        <dbReference type="ChEBI" id="CHEBI:82833"/>
        <dbReference type="EC" id="2.4.2.29"/>
    </reaction>
</comment>
<comment type="cofactor">
    <cofactor evidence="1">
        <name>Zn(2+)</name>
        <dbReference type="ChEBI" id="CHEBI:29105"/>
    </cofactor>
    <text evidence="1">Binds 1 zinc ion per subunit.</text>
</comment>
<comment type="pathway">
    <text evidence="1">tRNA modification; tRNA-queuosine biosynthesis.</text>
</comment>
<comment type="subunit">
    <text evidence="1">Homodimer. Within each dimer, one monomer is responsible for RNA recognition and catalysis, while the other monomer binds to the replacement base PreQ1.</text>
</comment>
<comment type="similarity">
    <text evidence="1">Belongs to the queuine tRNA-ribosyltransferase family.</text>
</comment>
<name>TGT_CLOK5</name>
<accession>A5N204</accession>
<evidence type="ECO:0000255" key="1">
    <source>
        <dbReference type="HAMAP-Rule" id="MF_00168"/>
    </source>
</evidence>
<organism>
    <name type="scientific">Clostridium kluyveri (strain ATCC 8527 / DSM 555 / NBRC 12016 / NCIMB 10680 / K1)</name>
    <dbReference type="NCBI Taxonomy" id="431943"/>
    <lineage>
        <taxon>Bacteria</taxon>
        <taxon>Bacillati</taxon>
        <taxon>Bacillota</taxon>
        <taxon>Clostridia</taxon>
        <taxon>Eubacteriales</taxon>
        <taxon>Clostridiaceae</taxon>
        <taxon>Clostridium</taxon>
    </lineage>
</organism>